<name>ATPG_LEUCK</name>
<feature type="chain" id="PRO_1000134173" description="ATP synthase gamma chain">
    <location>
        <begin position="1"/>
        <end position="302"/>
    </location>
</feature>
<organism>
    <name type="scientific">Leuconostoc citreum (strain KM20)</name>
    <dbReference type="NCBI Taxonomy" id="349519"/>
    <lineage>
        <taxon>Bacteria</taxon>
        <taxon>Bacillati</taxon>
        <taxon>Bacillota</taxon>
        <taxon>Bacilli</taxon>
        <taxon>Lactobacillales</taxon>
        <taxon>Lactobacillaceae</taxon>
        <taxon>Leuconostoc</taxon>
    </lineage>
</organism>
<evidence type="ECO:0000255" key="1">
    <source>
        <dbReference type="HAMAP-Rule" id="MF_00815"/>
    </source>
</evidence>
<keyword id="KW-0066">ATP synthesis</keyword>
<keyword id="KW-1003">Cell membrane</keyword>
<keyword id="KW-0139">CF(1)</keyword>
<keyword id="KW-0375">Hydrogen ion transport</keyword>
<keyword id="KW-0406">Ion transport</keyword>
<keyword id="KW-0472">Membrane</keyword>
<keyword id="KW-1185">Reference proteome</keyword>
<keyword id="KW-0813">Transport</keyword>
<gene>
    <name evidence="1" type="primary">atpG</name>
    <name type="ordered locus">LCK_01628</name>
</gene>
<sequence>MASLQDIQRRISSTKKTRQITSAMQMVSTAKLSQIQRYGRGYQAYAARLEAVVEHLVAAHLFDNADAKHIPLIAQRPIRKTGILVVTSDRGLVGSYNANVIKQTNALMARLNLDTTNTAILAVGGNGADFYKKRGFEVILEHRGVSDVPSFNEIRSVVKTVTSLYESEVFDALHVVYNHFVNRLTSEYRDVQLLPLTGDTLVAMGGTEAHKAELDIQSAYEVEPDTTAVLNVVLPQFAQSLVYEAVLDAKTAEHAASSTAMKAATDNAKDLIGRLELQFNRARQAAITTEITEITGGMAALE</sequence>
<reference key="1">
    <citation type="journal article" date="2008" name="J. Bacteriol.">
        <title>Complete genome sequence of Leuconostoc citreum KM20.</title>
        <authorList>
            <person name="Kim J.F."/>
            <person name="Jeong H."/>
            <person name="Lee J.-S."/>
            <person name="Choi S.-H."/>
            <person name="Ha M."/>
            <person name="Hur C.-G."/>
            <person name="Kim J.-S."/>
            <person name="Lee S."/>
            <person name="Park H.-S."/>
            <person name="Park Y.-H."/>
            <person name="Oh T.K."/>
        </authorList>
    </citation>
    <scope>NUCLEOTIDE SEQUENCE [LARGE SCALE GENOMIC DNA]</scope>
    <source>
        <strain>KM20</strain>
    </source>
</reference>
<comment type="function">
    <text evidence="1">Produces ATP from ADP in the presence of a proton gradient across the membrane. The gamma chain is believed to be important in regulating ATPase activity and the flow of protons through the CF(0) complex.</text>
</comment>
<comment type="subunit">
    <text evidence="1">F-type ATPases have 2 components, CF(1) - the catalytic core - and CF(0) - the membrane proton channel. CF(1) has five subunits: alpha(3), beta(3), gamma(1), delta(1), epsilon(1). CF(0) has three main subunits: a, b and c.</text>
</comment>
<comment type="subcellular location">
    <subcellularLocation>
        <location evidence="1">Cell membrane</location>
        <topology evidence="1">Peripheral membrane protein</topology>
    </subcellularLocation>
</comment>
<comment type="similarity">
    <text evidence="1">Belongs to the ATPase gamma chain family.</text>
</comment>
<protein>
    <recommendedName>
        <fullName evidence="1">ATP synthase gamma chain</fullName>
    </recommendedName>
    <alternativeName>
        <fullName evidence="1">ATP synthase F1 sector gamma subunit</fullName>
    </alternativeName>
    <alternativeName>
        <fullName evidence="1">F-ATPase gamma subunit</fullName>
    </alternativeName>
</protein>
<dbReference type="EMBL" id="DQ489736">
    <property type="protein sequence ID" value="ACA83451.1"/>
    <property type="molecule type" value="Genomic_DNA"/>
</dbReference>
<dbReference type="RefSeq" id="WP_004902056.1">
    <property type="nucleotide sequence ID" value="NC_010471.1"/>
</dbReference>
<dbReference type="SMR" id="B1MW86"/>
<dbReference type="STRING" id="349519.LCK_01628"/>
<dbReference type="KEGG" id="lci:LCK_01628"/>
<dbReference type="eggNOG" id="COG0224">
    <property type="taxonomic scope" value="Bacteria"/>
</dbReference>
<dbReference type="HOGENOM" id="CLU_050669_0_1_9"/>
<dbReference type="OrthoDB" id="9812769at2"/>
<dbReference type="Proteomes" id="UP000002166">
    <property type="component" value="Chromosome"/>
</dbReference>
<dbReference type="GO" id="GO:0005886">
    <property type="term" value="C:plasma membrane"/>
    <property type="evidence" value="ECO:0007669"/>
    <property type="project" value="UniProtKB-SubCell"/>
</dbReference>
<dbReference type="GO" id="GO:0045259">
    <property type="term" value="C:proton-transporting ATP synthase complex"/>
    <property type="evidence" value="ECO:0007669"/>
    <property type="project" value="UniProtKB-KW"/>
</dbReference>
<dbReference type="GO" id="GO:0005524">
    <property type="term" value="F:ATP binding"/>
    <property type="evidence" value="ECO:0007669"/>
    <property type="project" value="UniProtKB-UniRule"/>
</dbReference>
<dbReference type="GO" id="GO:0046933">
    <property type="term" value="F:proton-transporting ATP synthase activity, rotational mechanism"/>
    <property type="evidence" value="ECO:0007669"/>
    <property type="project" value="UniProtKB-UniRule"/>
</dbReference>
<dbReference type="GO" id="GO:0042777">
    <property type="term" value="P:proton motive force-driven plasma membrane ATP synthesis"/>
    <property type="evidence" value="ECO:0007669"/>
    <property type="project" value="UniProtKB-UniRule"/>
</dbReference>
<dbReference type="CDD" id="cd12151">
    <property type="entry name" value="F1-ATPase_gamma"/>
    <property type="match status" value="1"/>
</dbReference>
<dbReference type="Gene3D" id="3.40.1380.10">
    <property type="match status" value="1"/>
</dbReference>
<dbReference type="Gene3D" id="1.10.287.80">
    <property type="entry name" value="ATP synthase, gamma subunit, helix hairpin domain"/>
    <property type="match status" value="2"/>
</dbReference>
<dbReference type="HAMAP" id="MF_00815">
    <property type="entry name" value="ATP_synth_gamma_bact"/>
    <property type="match status" value="1"/>
</dbReference>
<dbReference type="InterPro" id="IPR035968">
    <property type="entry name" value="ATP_synth_F1_ATPase_gsu"/>
</dbReference>
<dbReference type="InterPro" id="IPR000131">
    <property type="entry name" value="ATP_synth_F1_gsu"/>
</dbReference>
<dbReference type="NCBIfam" id="TIGR01146">
    <property type="entry name" value="ATPsyn_F1gamma"/>
    <property type="match status" value="1"/>
</dbReference>
<dbReference type="NCBIfam" id="NF004147">
    <property type="entry name" value="PRK05621.2-1"/>
    <property type="match status" value="1"/>
</dbReference>
<dbReference type="PANTHER" id="PTHR11693">
    <property type="entry name" value="ATP SYNTHASE GAMMA CHAIN"/>
    <property type="match status" value="1"/>
</dbReference>
<dbReference type="PANTHER" id="PTHR11693:SF22">
    <property type="entry name" value="ATP SYNTHASE SUBUNIT GAMMA, MITOCHONDRIAL"/>
    <property type="match status" value="1"/>
</dbReference>
<dbReference type="Pfam" id="PF00231">
    <property type="entry name" value="ATP-synt"/>
    <property type="match status" value="1"/>
</dbReference>
<dbReference type="PRINTS" id="PR00126">
    <property type="entry name" value="ATPASEGAMMA"/>
</dbReference>
<dbReference type="SUPFAM" id="SSF52943">
    <property type="entry name" value="ATP synthase (F1-ATPase), gamma subunit"/>
    <property type="match status" value="1"/>
</dbReference>
<accession>B1MW86</accession>
<proteinExistence type="inferred from homology"/>